<name>LPAT2_ARATH</name>
<evidence type="ECO:0000250" key="1"/>
<evidence type="ECO:0000255" key="2"/>
<evidence type="ECO:0000256" key="3">
    <source>
        <dbReference type="SAM" id="MobiDB-lite"/>
    </source>
</evidence>
<evidence type="ECO:0000269" key="4">
    <source>
    </source>
</evidence>
<evidence type="ECO:0000269" key="5">
    <source>
    </source>
</evidence>
<evidence type="ECO:0000269" key="6">
    <source>
    </source>
</evidence>
<evidence type="ECO:0000305" key="7"/>
<feature type="chain" id="PRO_0000208179" description="1-acyl-sn-glycerol-3-phosphate acyltransferase 2">
    <location>
        <begin position="1"/>
        <end position="389"/>
    </location>
</feature>
<feature type="transmembrane region" description="Helical" evidence="2">
    <location>
        <begin position="2"/>
        <end position="22"/>
    </location>
</feature>
<feature type="transmembrane region" description="Helical" evidence="2">
    <location>
        <begin position="305"/>
        <end position="325"/>
    </location>
</feature>
<feature type="transmembrane region" description="Helical" evidence="2">
    <location>
        <begin position="333"/>
        <end position="353"/>
    </location>
</feature>
<feature type="region of interest" description="Disordered" evidence="3">
    <location>
        <begin position="357"/>
        <end position="389"/>
    </location>
</feature>
<feature type="short sequence motif" description="HXXXXD motif">
    <location>
        <begin position="91"/>
        <end position="96"/>
    </location>
</feature>
<feature type="compositionally biased region" description="Basic and acidic residues" evidence="3">
    <location>
        <begin position="370"/>
        <end position="389"/>
    </location>
</feature>
<feature type="sequence conflict" description="In Ref. 3; AAM61033." evidence="7" ref="3">
    <original>G</original>
    <variation>S</variation>
    <location>
        <position position="205"/>
    </location>
</feature>
<keyword id="KW-0012">Acyltransferase</keyword>
<keyword id="KW-0217">Developmental protein</keyword>
<keyword id="KW-0256">Endoplasmic reticulum</keyword>
<keyword id="KW-0444">Lipid biosynthesis</keyword>
<keyword id="KW-0443">Lipid metabolism</keyword>
<keyword id="KW-0472">Membrane</keyword>
<keyword id="KW-0594">Phospholipid biosynthesis</keyword>
<keyword id="KW-1208">Phospholipid metabolism</keyword>
<keyword id="KW-1185">Reference proteome</keyword>
<keyword id="KW-0808">Transferase</keyword>
<keyword id="KW-0812">Transmembrane</keyword>
<keyword id="KW-1133">Transmembrane helix</keyword>
<gene>
    <name type="primary">LPAT2</name>
    <name type="synonym">LPAAT2</name>
    <name type="ordered locus">At3g57650</name>
    <name type="ORF">F15B8.160</name>
</gene>
<proteinExistence type="evidence at protein level"/>
<sequence length="389" mass="43676">MVIAAAVIVPLGLLFFISGLAVNLFQAVCYVLIRPLSKNTYRKINRVVAETLWLELVWIVDWWAGVKIQVFADNETFNRMGKEHALVVCNHRSDIDWLVGWILAQRSGCLGSALAVMKKSSKFLPVIGWSMWFSEYLFLERNWAKDESTLKSGLQRLSDFPRPFWLALFVEGTRFTEAKLKAAQEYAASSELPIPRNVLIPRTKGFVSAVSNMRSFVPAIYDMTVTIPKTSPPPTMLRLFKGQPSVVHVHIKCHSMKDLPESDDAIAQWCRDQFVAKDALLDKHIAADTFPGQQEQNIGRPIKSLAVVLSWACVLTLGAIKFLHWAQLFSSWKGITISALGLGIITLCMQILIRSSQSERSTPAKVVPAKPKDNHHPESSSQTETEKEK</sequence>
<comment type="function">
    <text evidence="5">Converts lysophosphatidic acid (LPA) into phosphatidic acid by incorporating acyl moiety at the 2 position. Has preference for C-18-CoA substrates compared to C-16-CoA substrates. Required for female but not male gametophyte development.</text>
</comment>
<comment type="catalytic activity">
    <reaction evidence="5">
        <text>a 1-acyl-sn-glycero-3-phosphate + an acyl-CoA = a 1,2-diacyl-sn-glycero-3-phosphate + CoA</text>
        <dbReference type="Rhea" id="RHEA:19709"/>
        <dbReference type="ChEBI" id="CHEBI:57287"/>
        <dbReference type="ChEBI" id="CHEBI:57970"/>
        <dbReference type="ChEBI" id="CHEBI:58342"/>
        <dbReference type="ChEBI" id="CHEBI:58608"/>
        <dbReference type="EC" id="2.3.1.51"/>
    </reaction>
</comment>
<comment type="pathway">
    <text>Phospholipid metabolism; CDP-diacylglycerol biosynthesis; CDP-diacylglycerol from sn-glycerol 3-phosphate: step 2/3.</text>
</comment>
<comment type="subunit">
    <text evidence="6">Interacts with GPAT9 and DGAT1.</text>
</comment>
<comment type="subcellular location">
    <subcellularLocation>
        <location evidence="5">Endoplasmic reticulum membrane</location>
        <topology evidence="5">Multi-pass membrane protein</topology>
    </subcellularLocation>
</comment>
<comment type="tissue specificity">
    <text evidence="4 5">Present in roots, leaves, stems, floral buds and siliques (at protein level). Widely expressed. In contrast to LPAT1, it is not expressed at higher level in leaves.</text>
</comment>
<comment type="domain">
    <text evidence="1">The HXXXXD motif is essential for acyltransferase activity and may constitute the binding site for the phosphate moiety of the glycerol-3-phosphate.</text>
</comment>
<comment type="similarity">
    <text evidence="7">Belongs to the 1-acyl-sn-glycerol-3-phosphate acyltransferase family.</text>
</comment>
<comment type="sequence caution" evidence="7">
    <conflict type="erroneous gene model prediction">
        <sequence resource="EMBL-CDS" id="CAB41190"/>
    </conflict>
</comment>
<dbReference type="EC" id="2.3.1.51"/>
<dbReference type="EMBL" id="AL049660">
    <property type="protein sequence ID" value="CAB41190.1"/>
    <property type="status" value="ALT_SEQ"/>
    <property type="molecule type" value="Genomic_DNA"/>
</dbReference>
<dbReference type="EMBL" id="CP002686">
    <property type="protein sequence ID" value="AEE79683.1"/>
    <property type="molecule type" value="Genomic_DNA"/>
</dbReference>
<dbReference type="EMBL" id="AY084461">
    <property type="protein sequence ID" value="AAM61033.1"/>
    <property type="molecule type" value="mRNA"/>
</dbReference>
<dbReference type="PIR" id="T06755">
    <property type="entry name" value="T06755"/>
</dbReference>
<dbReference type="RefSeq" id="NP_567052.1">
    <property type="nucleotide sequence ID" value="NM_115625.4"/>
</dbReference>
<dbReference type="BioGRID" id="10249">
    <property type="interactions" value="17"/>
</dbReference>
<dbReference type="FunCoup" id="Q8LG50">
    <property type="interactions" value="3062"/>
</dbReference>
<dbReference type="IntAct" id="Q8LG50">
    <property type="interactions" value="17"/>
</dbReference>
<dbReference type="STRING" id="3702.Q8LG50"/>
<dbReference type="PaxDb" id="3702-AT3G57650.1"/>
<dbReference type="ProteomicsDB" id="238793"/>
<dbReference type="EnsemblPlants" id="AT3G57650.1">
    <property type="protein sequence ID" value="AT3G57650.1"/>
    <property type="gene ID" value="AT3G57650"/>
</dbReference>
<dbReference type="GeneID" id="824934"/>
<dbReference type="Gramene" id="AT3G57650.1">
    <property type="protein sequence ID" value="AT3G57650.1"/>
    <property type="gene ID" value="AT3G57650"/>
</dbReference>
<dbReference type="KEGG" id="ath:AT3G57650"/>
<dbReference type="Araport" id="AT3G57650"/>
<dbReference type="TAIR" id="AT3G57650">
    <property type="gene designation" value="LPAT2"/>
</dbReference>
<dbReference type="eggNOG" id="KOG1505">
    <property type="taxonomic scope" value="Eukaryota"/>
</dbReference>
<dbReference type="HOGENOM" id="CLU_041844_5_0_1"/>
<dbReference type="InParanoid" id="Q8LG50"/>
<dbReference type="OMA" id="EQECSTW"/>
<dbReference type="OrthoDB" id="189226at2759"/>
<dbReference type="BioCyc" id="ARA:AT3G57650-MONOMER"/>
<dbReference type="BRENDA" id="2.3.1.51">
    <property type="organism ID" value="399"/>
</dbReference>
<dbReference type="UniPathway" id="UPA00557">
    <property type="reaction ID" value="UER00613"/>
</dbReference>
<dbReference type="PRO" id="PR:Q8LG50"/>
<dbReference type="Proteomes" id="UP000006548">
    <property type="component" value="Chromosome 3"/>
</dbReference>
<dbReference type="ExpressionAtlas" id="Q8LG50">
    <property type="expression patterns" value="baseline and differential"/>
</dbReference>
<dbReference type="GO" id="GO:0005783">
    <property type="term" value="C:endoplasmic reticulum"/>
    <property type="evidence" value="ECO:0000314"/>
    <property type="project" value="TAIR"/>
</dbReference>
<dbReference type="GO" id="GO:0005789">
    <property type="term" value="C:endoplasmic reticulum membrane"/>
    <property type="evidence" value="ECO:0007669"/>
    <property type="project" value="UniProtKB-SubCell"/>
</dbReference>
<dbReference type="GO" id="GO:0003841">
    <property type="term" value="F:1-acylglycerol-3-phosphate O-acyltransferase activity"/>
    <property type="evidence" value="ECO:0000314"/>
    <property type="project" value="TAIR"/>
</dbReference>
<dbReference type="GO" id="GO:0016024">
    <property type="term" value="P:CDP-diacylglycerol biosynthetic process"/>
    <property type="evidence" value="ECO:0007669"/>
    <property type="project" value="UniProtKB-UniPathway"/>
</dbReference>
<dbReference type="CDD" id="cd07990">
    <property type="entry name" value="LPLAT_LCLAT1-like"/>
    <property type="match status" value="1"/>
</dbReference>
<dbReference type="InterPro" id="IPR032098">
    <property type="entry name" value="Acyltransf_C"/>
</dbReference>
<dbReference type="InterPro" id="IPR002123">
    <property type="entry name" value="Plipid/glycerol_acylTrfase"/>
</dbReference>
<dbReference type="PANTHER" id="PTHR10983">
    <property type="entry name" value="1-ACYLGLYCEROL-3-PHOSPHATE ACYLTRANSFERASE-RELATED"/>
    <property type="match status" value="1"/>
</dbReference>
<dbReference type="PANTHER" id="PTHR10983:SF24">
    <property type="entry name" value="1-ACYLGLYCEROL-3-PHOSPHATE O-ACYLTRANSFERASE 3, ISOFORM E-RELATED"/>
    <property type="match status" value="1"/>
</dbReference>
<dbReference type="Pfam" id="PF16076">
    <property type="entry name" value="Acyltransf_C"/>
    <property type="match status" value="1"/>
</dbReference>
<dbReference type="Pfam" id="PF01553">
    <property type="entry name" value="Acyltransferase"/>
    <property type="match status" value="1"/>
</dbReference>
<dbReference type="SMART" id="SM00563">
    <property type="entry name" value="PlsC"/>
    <property type="match status" value="1"/>
</dbReference>
<dbReference type="SUPFAM" id="SSF69593">
    <property type="entry name" value="Glycerol-3-phosphate (1)-acyltransferase"/>
    <property type="match status" value="1"/>
</dbReference>
<protein>
    <recommendedName>
        <fullName>1-acyl-sn-glycerol-3-phosphate acyltransferase 2</fullName>
        <ecNumber>2.3.1.51</ecNumber>
    </recommendedName>
    <alternativeName>
        <fullName>Lysophosphatidyl acyltransferase 2</fullName>
    </alternativeName>
</protein>
<accession>Q8LG50</accession>
<accession>Q9SVX9</accession>
<reference key="1">
    <citation type="journal article" date="2000" name="Nature">
        <title>Sequence and analysis of chromosome 3 of the plant Arabidopsis thaliana.</title>
        <authorList>
            <person name="Salanoubat M."/>
            <person name="Lemcke K."/>
            <person name="Rieger M."/>
            <person name="Ansorge W."/>
            <person name="Unseld M."/>
            <person name="Fartmann B."/>
            <person name="Valle G."/>
            <person name="Bloecker H."/>
            <person name="Perez-Alonso M."/>
            <person name="Obermaier B."/>
            <person name="Delseny M."/>
            <person name="Boutry M."/>
            <person name="Grivell L.A."/>
            <person name="Mache R."/>
            <person name="Puigdomenech P."/>
            <person name="De Simone V."/>
            <person name="Choisne N."/>
            <person name="Artiguenave F."/>
            <person name="Robert C."/>
            <person name="Brottier P."/>
            <person name="Wincker P."/>
            <person name="Cattolico L."/>
            <person name="Weissenbach J."/>
            <person name="Saurin W."/>
            <person name="Quetier F."/>
            <person name="Schaefer M."/>
            <person name="Mueller-Auer S."/>
            <person name="Gabel C."/>
            <person name="Fuchs M."/>
            <person name="Benes V."/>
            <person name="Wurmbach E."/>
            <person name="Drzonek H."/>
            <person name="Erfle H."/>
            <person name="Jordan N."/>
            <person name="Bangert S."/>
            <person name="Wiedelmann R."/>
            <person name="Kranz H."/>
            <person name="Voss H."/>
            <person name="Holland R."/>
            <person name="Brandt P."/>
            <person name="Nyakatura G."/>
            <person name="Vezzi A."/>
            <person name="D'Angelo M."/>
            <person name="Pallavicini A."/>
            <person name="Toppo S."/>
            <person name="Simionati B."/>
            <person name="Conrad A."/>
            <person name="Hornischer K."/>
            <person name="Kauer G."/>
            <person name="Loehnert T.-H."/>
            <person name="Nordsiek G."/>
            <person name="Reichelt J."/>
            <person name="Scharfe M."/>
            <person name="Schoen O."/>
            <person name="Bargues M."/>
            <person name="Terol J."/>
            <person name="Climent J."/>
            <person name="Navarro P."/>
            <person name="Collado C."/>
            <person name="Perez-Perez A."/>
            <person name="Ottenwaelder B."/>
            <person name="Duchemin D."/>
            <person name="Cooke R."/>
            <person name="Laudie M."/>
            <person name="Berger-Llauro C."/>
            <person name="Purnelle B."/>
            <person name="Masuy D."/>
            <person name="de Haan M."/>
            <person name="Maarse A.C."/>
            <person name="Alcaraz J.-P."/>
            <person name="Cottet A."/>
            <person name="Casacuberta E."/>
            <person name="Monfort A."/>
            <person name="Argiriou A."/>
            <person name="Flores M."/>
            <person name="Liguori R."/>
            <person name="Vitale D."/>
            <person name="Mannhaupt G."/>
            <person name="Haase D."/>
            <person name="Schoof H."/>
            <person name="Rudd S."/>
            <person name="Zaccaria P."/>
            <person name="Mewes H.-W."/>
            <person name="Mayer K.F.X."/>
            <person name="Kaul S."/>
            <person name="Town C.D."/>
            <person name="Koo H.L."/>
            <person name="Tallon L.J."/>
            <person name="Jenkins J."/>
            <person name="Rooney T."/>
            <person name="Rizzo M."/>
            <person name="Walts A."/>
            <person name="Utterback T."/>
            <person name="Fujii C.Y."/>
            <person name="Shea T.P."/>
            <person name="Creasy T.H."/>
            <person name="Haas B."/>
            <person name="Maiti R."/>
            <person name="Wu D."/>
            <person name="Peterson J."/>
            <person name="Van Aken S."/>
            <person name="Pai G."/>
            <person name="Militscher J."/>
            <person name="Sellers P."/>
            <person name="Gill J.E."/>
            <person name="Feldblyum T.V."/>
            <person name="Preuss D."/>
            <person name="Lin X."/>
            <person name="Nierman W.C."/>
            <person name="Salzberg S.L."/>
            <person name="White O."/>
            <person name="Venter J.C."/>
            <person name="Fraser C.M."/>
            <person name="Kaneko T."/>
            <person name="Nakamura Y."/>
            <person name="Sato S."/>
            <person name="Kato T."/>
            <person name="Asamizu E."/>
            <person name="Sasamoto S."/>
            <person name="Kimura T."/>
            <person name="Idesawa K."/>
            <person name="Kawashima K."/>
            <person name="Kishida Y."/>
            <person name="Kiyokawa C."/>
            <person name="Kohara M."/>
            <person name="Matsumoto M."/>
            <person name="Matsuno A."/>
            <person name="Muraki A."/>
            <person name="Nakayama S."/>
            <person name="Nakazaki N."/>
            <person name="Shinpo S."/>
            <person name="Takeuchi C."/>
            <person name="Wada T."/>
            <person name="Watanabe A."/>
            <person name="Yamada M."/>
            <person name="Yasuda M."/>
            <person name="Tabata S."/>
        </authorList>
    </citation>
    <scope>NUCLEOTIDE SEQUENCE [LARGE SCALE GENOMIC DNA]</scope>
    <source>
        <strain>cv. Columbia</strain>
    </source>
</reference>
<reference key="2">
    <citation type="journal article" date="2017" name="Plant J.">
        <title>Araport11: a complete reannotation of the Arabidopsis thaliana reference genome.</title>
        <authorList>
            <person name="Cheng C.Y."/>
            <person name="Krishnakumar V."/>
            <person name="Chan A.P."/>
            <person name="Thibaud-Nissen F."/>
            <person name="Schobel S."/>
            <person name="Town C.D."/>
        </authorList>
    </citation>
    <scope>GENOME REANNOTATION</scope>
    <source>
        <strain>cv. Columbia</strain>
    </source>
</reference>
<reference key="3">
    <citation type="submission" date="2002-03" db="EMBL/GenBank/DDBJ databases">
        <title>Full-length cDNA from Arabidopsis thaliana.</title>
        <authorList>
            <person name="Brover V.V."/>
            <person name="Troukhan M.E."/>
            <person name="Alexandrov N.A."/>
            <person name="Lu Y.-P."/>
            <person name="Flavell R.B."/>
            <person name="Feldmann K.A."/>
        </authorList>
    </citation>
    <scope>NUCLEOTIDE SEQUENCE [LARGE SCALE MRNA]</scope>
</reference>
<reference key="4">
    <citation type="journal article" date="2004" name="Plant Physiol.">
        <title>Plastid lysophosphatidyl acyltransferase is essential for embryo development in Arabidopsis.</title>
        <authorList>
            <person name="Kim H.U."/>
            <person name="Huang A.H.C."/>
        </authorList>
    </citation>
    <scope>TISSUE SPECIFICITY</scope>
</reference>
<reference key="5">
    <citation type="journal article" date="2005" name="Plant Cell">
        <title>Ubiquitous and endoplasmic reticulum-located lysophosphatidyl acyltransferase, LPAT2, is essential for female but not male gametophyte development in Arabidopsis.</title>
        <authorList>
            <person name="Kim H.U."/>
            <person name="Li Y."/>
            <person name="Huang A.H.C."/>
        </authorList>
    </citation>
    <scope>FUNCTION</scope>
    <scope>ENZYME ACTIVITY</scope>
    <scope>SUBCELLULAR LOCATION</scope>
    <scope>TISSUE SPECIFICITY</scope>
</reference>
<reference key="6">
    <citation type="journal article" date="2016" name="Plant Physiol.">
        <title>Identification of Arabidopsis GPAT9 (At5g60620) as an essential gene involved in triacylglycerol biosynthesis.</title>
        <authorList>
            <person name="Shockey J."/>
            <person name="Regmi A."/>
            <person name="Cotton K."/>
            <person name="Adhikari N."/>
            <person name="Browse J."/>
            <person name="Bates P.D."/>
        </authorList>
    </citation>
    <scope>INTERACTION WITH GPAT9 AND DGAT1</scope>
    <source>
        <strain>cv. Columbia</strain>
    </source>
</reference>
<organism>
    <name type="scientific">Arabidopsis thaliana</name>
    <name type="common">Mouse-ear cress</name>
    <dbReference type="NCBI Taxonomy" id="3702"/>
    <lineage>
        <taxon>Eukaryota</taxon>
        <taxon>Viridiplantae</taxon>
        <taxon>Streptophyta</taxon>
        <taxon>Embryophyta</taxon>
        <taxon>Tracheophyta</taxon>
        <taxon>Spermatophyta</taxon>
        <taxon>Magnoliopsida</taxon>
        <taxon>eudicotyledons</taxon>
        <taxon>Gunneridae</taxon>
        <taxon>Pentapetalae</taxon>
        <taxon>rosids</taxon>
        <taxon>malvids</taxon>
        <taxon>Brassicales</taxon>
        <taxon>Brassicaceae</taxon>
        <taxon>Camelineae</taxon>
        <taxon>Arabidopsis</taxon>
    </lineage>
</organism>